<feature type="chain" id="PRO_0000367620" description="Glutamate--tRNA ligase">
    <location>
        <begin position="1"/>
        <end position="506"/>
    </location>
</feature>
<feature type="short sequence motif" description="'HIGH' region" evidence="1">
    <location>
        <begin position="24"/>
        <end position="34"/>
    </location>
</feature>
<feature type="short sequence motif" description="'KMSKS' region" evidence="1">
    <location>
        <begin position="266"/>
        <end position="270"/>
    </location>
</feature>
<feature type="binding site" evidence="1">
    <location>
        <position position="121"/>
    </location>
    <ligand>
        <name>Zn(2+)</name>
        <dbReference type="ChEBI" id="CHEBI:29105"/>
    </ligand>
</feature>
<feature type="binding site" evidence="1">
    <location>
        <position position="123"/>
    </location>
    <ligand>
        <name>Zn(2+)</name>
        <dbReference type="ChEBI" id="CHEBI:29105"/>
    </ligand>
</feature>
<feature type="binding site" evidence="1">
    <location>
        <position position="148"/>
    </location>
    <ligand>
        <name>Zn(2+)</name>
        <dbReference type="ChEBI" id="CHEBI:29105"/>
    </ligand>
</feature>
<feature type="binding site" evidence="1">
    <location>
        <position position="150"/>
    </location>
    <ligand>
        <name>Zn(2+)</name>
        <dbReference type="ChEBI" id="CHEBI:29105"/>
    </ligand>
</feature>
<feature type="binding site" evidence="1">
    <location>
        <position position="269"/>
    </location>
    <ligand>
        <name>ATP</name>
        <dbReference type="ChEBI" id="CHEBI:30616"/>
    </ligand>
</feature>
<dbReference type="EC" id="6.1.1.17" evidence="1"/>
<dbReference type="EMBL" id="CP000993">
    <property type="protein sequence ID" value="ACH94615.1"/>
    <property type="molecule type" value="Genomic_DNA"/>
</dbReference>
<dbReference type="RefSeq" id="WP_012538855.1">
    <property type="nucleotide sequence ID" value="NC_011244.1"/>
</dbReference>
<dbReference type="SMR" id="B5RRI1"/>
<dbReference type="KEGG" id="bre:BRE_371"/>
<dbReference type="HOGENOM" id="CLU_015768_6_3_12"/>
<dbReference type="Proteomes" id="UP000000612">
    <property type="component" value="Chromosome"/>
</dbReference>
<dbReference type="GO" id="GO:0005829">
    <property type="term" value="C:cytosol"/>
    <property type="evidence" value="ECO:0007669"/>
    <property type="project" value="TreeGrafter"/>
</dbReference>
<dbReference type="GO" id="GO:0005524">
    <property type="term" value="F:ATP binding"/>
    <property type="evidence" value="ECO:0007669"/>
    <property type="project" value="UniProtKB-UniRule"/>
</dbReference>
<dbReference type="GO" id="GO:0004818">
    <property type="term" value="F:glutamate-tRNA ligase activity"/>
    <property type="evidence" value="ECO:0007669"/>
    <property type="project" value="UniProtKB-UniRule"/>
</dbReference>
<dbReference type="GO" id="GO:0000049">
    <property type="term" value="F:tRNA binding"/>
    <property type="evidence" value="ECO:0007669"/>
    <property type="project" value="InterPro"/>
</dbReference>
<dbReference type="GO" id="GO:0008270">
    <property type="term" value="F:zinc ion binding"/>
    <property type="evidence" value="ECO:0007669"/>
    <property type="project" value="UniProtKB-UniRule"/>
</dbReference>
<dbReference type="GO" id="GO:0006424">
    <property type="term" value="P:glutamyl-tRNA aminoacylation"/>
    <property type="evidence" value="ECO:0007669"/>
    <property type="project" value="UniProtKB-UniRule"/>
</dbReference>
<dbReference type="CDD" id="cd00808">
    <property type="entry name" value="GluRS_core"/>
    <property type="match status" value="1"/>
</dbReference>
<dbReference type="FunFam" id="3.40.50.620:FF:000045">
    <property type="entry name" value="Glutamate--tRNA ligase, mitochondrial"/>
    <property type="match status" value="1"/>
</dbReference>
<dbReference type="Gene3D" id="1.10.10.350">
    <property type="match status" value="1"/>
</dbReference>
<dbReference type="Gene3D" id="1.10.8.70">
    <property type="entry name" value="Glutamate-tRNA synthetase, class I, anticodon-binding domain 1"/>
    <property type="match status" value="1"/>
</dbReference>
<dbReference type="Gene3D" id="3.40.50.620">
    <property type="entry name" value="HUPs"/>
    <property type="match status" value="1"/>
</dbReference>
<dbReference type="HAMAP" id="MF_00022">
    <property type="entry name" value="Glu_tRNA_synth_type1"/>
    <property type="match status" value="1"/>
</dbReference>
<dbReference type="InterPro" id="IPR045462">
    <property type="entry name" value="aa-tRNA-synth_I_cd-bd"/>
</dbReference>
<dbReference type="InterPro" id="IPR020751">
    <property type="entry name" value="aa-tRNA-synth_I_codon-bd_sub2"/>
</dbReference>
<dbReference type="InterPro" id="IPR008925">
    <property type="entry name" value="aa_tRNA-synth_I_cd-bd_sf"/>
</dbReference>
<dbReference type="InterPro" id="IPR004527">
    <property type="entry name" value="Glu-tRNA-ligase_bac/mito"/>
</dbReference>
<dbReference type="InterPro" id="IPR020752">
    <property type="entry name" value="Glu-tRNA-synth_I_codon-bd_sub1"/>
</dbReference>
<dbReference type="InterPro" id="IPR000924">
    <property type="entry name" value="Glu/Gln-tRNA-synth"/>
</dbReference>
<dbReference type="InterPro" id="IPR020058">
    <property type="entry name" value="Glu/Gln-tRNA-synth_Ib_cat-dom"/>
</dbReference>
<dbReference type="InterPro" id="IPR049940">
    <property type="entry name" value="GluQ/Sye"/>
</dbReference>
<dbReference type="InterPro" id="IPR033910">
    <property type="entry name" value="GluRS_core"/>
</dbReference>
<dbReference type="InterPro" id="IPR014729">
    <property type="entry name" value="Rossmann-like_a/b/a_fold"/>
</dbReference>
<dbReference type="NCBIfam" id="TIGR00464">
    <property type="entry name" value="gltX_bact"/>
    <property type="match status" value="1"/>
</dbReference>
<dbReference type="PANTHER" id="PTHR43311">
    <property type="entry name" value="GLUTAMATE--TRNA LIGASE"/>
    <property type="match status" value="1"/>
</dbReference>
<dbReference type="PANTHER" id="PTHR43311:SF2">
    <property type="entry name" value="GLUTAMATE--TRNA LIGASE, MITOCHONDRIAL-RELATED"/>
    <property type="match status" value="1"/>
</dbReference>
<dbReference type="Pfam" id="PF19269">
    <property type="entry name" value="Anticodon_2"/>
    <property type="match status" value="1"/>
</dbReference>
<dbReference type="Pfam" id="PF00749">
    <property type="entry name" value="tRNA-synt_1c"/>
    <property type="match status" value="1"/>
</dbReference>
<dbReference type="PRINTS" id="PR00987">
    <property type="entry name" value="TRNASYNTHGLU"/>
</dbReference>
<dbReference type="SUPFAM" id="SSF48163">
    <property type="entry name" value="An anticodon-binding domain of class I aminoacyl-tRNA synthetases"/>
    <property type="match status" value="1"/>
</dbReference>
<dbReference type="SUPFAM" id="SSF52374">
    <property type="entry name" value="Nucleotidylyl transferase"/>
    <property type="match status" value="1"/>
</dbReference>
<evidence type="ECO:0000255" key="1">
    <source>
        <dbReference type="HAMAP-Rule" id="MF_00022"/>
    </source>
</evidence>
<keyword id="KW-0030">Aminoacyl-tRNA synthetase</keyword>
<keyword id="KW-0067">ATP-binding</keyword>
<keyword id="KW-0963">Cytoplasm</keyword>
<keyword id="KW-0436">Ligase</keyword>
<keyword id="KW-0479">Metal-binding</keyword>
<keyword id="KW-0547">Nucleotide-binding</keyword>
<keyword id="KW-0648">Protein biosynthesis</keyword>
<keyword id="KW-0862">Zinc</keyword>
<name>SYE_BORRA</name>
<organism>
    <name type="scientific">Borrelia recurrentis (strain A1)</name>
    <dbReference type="NCBI Taxonomy" id="412418"/>
    <lineage>
        <taxon>Bacteria</taxon>
        <taxon>Pseudomonadati</taxon>
        <taxon>Spirochaetota</taxon>
        <taxon>Spirochaetia</taxon>
        <taxon>Spirochaetales</taxon>
        <taxon>Borreliaceae</taxon>
        <taxon>Borrelia</taxon>
    </lineage>
</organism>
<accession>B5RRI1</accession>
<gene>
    <name evidence="1" type="primary">gltX</name>
    <name type="ordered locus">BRE_371</name>
</gene>
<protein>
    <recommendedName>
        <fullName evidence="1">Glutamate--tRNA ligase</fullName>
        <ecNumber evidence="1">6.1.1.17</ecNumber>
    </recommendedName>
    <alternativeName>
        <fullName evidence="1">Glutamyl-tRNA synthetase</fullName>
        <shortName evidence="1">GluRS</shortName>
    </alternativeName>
</protein>
<proteinExistence type="inferred from homology"/>
<comment type="function">
    <text evidence="1">Catalyzes the attachment of glutamate to tRNA(Glu) in a two-step reaction: glutamate is first activated by ATP to form Glu-AMP and then transferred to the acceptor end of tRNA(Glu).</text>
</comment>
<comment type="catalytic activity">
    <reaction evidence="1">
        <text>tRNA(Glu) + L-glutamate + ATP = L-glutamyl-tRNA(Glu) + AMP + diphosphate</text>
        <dbReference type="Rhea" id="RHEA:23540"/>
        <dbReference type="Rhea" id="RHEA-COMP:9663"/>
        <dbReference type="Rhea" id="RHEA-COMP:9680"/>
        <dbReference type="ChEBI" id="CHEBI:29985"/>
        <dbReference type="ChEBI" id="CHEBI:30616"/>
        <dbReference type="ChEBI" id="CHEBI:33019"/>
        <dbReference type="ChEBI" id="CHEBI:78442"/>
        <dbReference type="ChEBI" id="CHEBI:78520"/>
        <dbReference type="ChEBI" id="CHEBI:456215"/>
        <dbReference type="EC" id="6.1.1.17"/>
    </reaction>
</comment>
<comment type="cofactor">
    <cofactor evidence="1">
        <name>Zn(2+)</name>
        <dbReference type="ChEBI" id="CHEBI:29105"/>
    </cofactor>
    <text evidence="1">Binds 1 zinc ion per subunit.</text>
</comment>
<comment type="subunit">
    <text evidence="1">Monomer.</text>
</comment>
<comment type="subcellular location">
    <subcellularLocation>
        <location evidence="1">Cytoplasm</location>
    </subcellularLocation>
</comment>
<comment type="similarity">
    <text evidence="1">Belongs to the class-I aminoacyl-tRNA synthetase family. Glutamate--tRNA ligase type 1 subfamily.</text>
</comment>
<reference key="1">
    <citation type="journal article" date="2008" name="PLoS Genet.">
        <title>The genome of Borrelia recurrentis, the agent of deadly louse-borne relapsing fever, is a degraded subset of tick-borne Borrelia duttonii.</title>
        <authorList>
            <person name="Lescot M."/>
            <person name="Audic S."/>
            <person name="Robert C."/>
            <person name="Nguyen T.T."/>
            <person name="Blanc G."/>
            <person name="Cutler S.J."/>
            <person name="Wincker P."/>
            <person name="Couloux A."/>
            <person name="Claverie J.-M."/>
            <person name="Raoult D."/>
            <person name="Drancourt M."/>
        </authorList>
    </citation>
    <scope>NUCLEOTIDE SEQUENCE [LARGE SCALE GENOMIC DNA]</scope>
    <source>
        <strain>A1</strain>
    </source>
</reference>
<sequence>MIFQKRTFFIKRGCVLNIRVRYAPSPTGLQHIGGIRTALFNYFFAKSFNGKFLLRIEDTDQTRYYKEAEEDLYQSLAWLGIDFDEGPTCGGSYSPYIQSQRTEIYRKYAKELIESGNAYYCYCSPDRLERIRKIQTINKMVPGYDRHCRHLNKDEIKDALSLGISPVIRFKIPFDGETSFNDILLGKITWANKDISPDPVILKSDGFPTYHLANVVDDHLMEISHVLRAQEWISSGSLHVLLYNAFGWNPPIYCHLPMVMGSDGQKLSKRHGATALKQFIDDGYLPEAIINYVTLLGWSYDGKSEFFTKNELQKLFSIDKISKSPAVFDYNKLDFFNSHYIRTKEDHELAELLLPFLQKAGYIKKDSNSCDKEKLLLLVPLIKPRIRKLGDAVGMLRFFYTNISTWNVNEFLGKKKTVRDIYLLLEKIKPVLEGFETRILSENEQIFYNFAKENNLKIGEVLIPIRIAVLGSKVSPPLFDSLQLLGKVKVFDRINKAQDFLKKYEL</sequence>